<accession>C4Y584</accession>
<organism>
    <name type="scientific">Clavispora lusitaniae (strain ATCC 42720)</name>
    <name type="common">Yeast</name>
    <name type="synonym">Candida lusitaniae</name>
    <dbReference type="NCBI Taxonomy" id="306902"/>
    <lineage>
        <taxon>Eukaryota</taxon>
        <taxon>Fungi</taxon>
        <taxon>Dikarya</taxon>
        <taxon>Ascomycota</taxon>
        <taxon>Saccharomycotina</taxon>
        <taxon>Pichiomycetes</taxon>
        <taxon>Metschnikowiaceae</taxon>
        <taxon>Clavispora</taxon>
    </lineage>
</organism>
<sequence>MRISPRLFLSKAERFVPKSGVYPQGFAVGGIHCGIKKPDVLDLAMLQNTSGKDAVAAAVFTQNKFKAAPVQVSAEILEKSGGAINSLIVNSGNANAVTGTKGLEDARSMVAATDEAAKNTKTASLVMSTGVIGNRLPIGNILSGIPVLGQQLGSTHAHWLQCAQAICTTDSFPKMVSKQFSLNGNTYALAGVAKGAGMICPNMATLLGFFATDAPVSRSALQSILAFAVDRSFNSISVDGDMSTNDTIVAIANGAAGGPLIENEDTPAFAALRGEITAFAQQLASLVVRDGEGATKFITIRVVNAKSYADAKCVASTVANSSLFKTAMFGNDANWGRILCAIGYAPVSGSSVDTTRTSVSFVPSEGEPLRLLVNGEPETVDENRALEILQKRGFGGGNRFGHRRKPRGHISDV</sequence>
<evidence type="ECO:0000255" key="1">
    <source>
        <dbReference type="HAMAP-Rule" id="MF_03124"/>
    </source>
</evidence>
<comment type="function">
    <text evidence="1">Catalyzes two activities which are involved in the cyclic version of arginine biosynthesis: the synthesis of acetylglutamate from glutamate and acetyl-CoA, and of ornithine by transacetylation between acetylornithine and glutamate.</text>
</comment>
<comment type="catalytic activity">
    <reaction evidence="1">
        <text>N(2)-acetyl-L-ornithine + L-glutamate = N-acetyl-L-glutamate + L-ornithine</text>
        <dbReference type="Rhea" id="RHEA:15349"/>
        <dbReference type="ChEBI" id="CHEBI:29985"/>
        <dbReference type="ChEBI" id="CHEBI:44337"/>
        <dbReference type="ChEBI" id="CHEBI:46911"/>
        <dbReference type="ChEBI" id="CHEBI:57805"/>
        <dbReference type="EC" id="2.3.1.35"/>
    </reaction>
</comment>
<comment type="catalytic activity">
    <reaction evidence="1">
        <text>L-glutamate + acetyl-CoA = N-acetyl-L-glutamate + CoA + H(+)</text>
        <dbReference type="Rhea" id="RHEA:24292"/>
        <dbReference type="ChEBI" id="CHEBI:15378"/>
        <dbReference type="ChEBI" id="CHEBI:29985"/>
        <dbReference type="ChEBI" id="CHEBI:44337"/>
        <dbReference type="ChEBI" id="CHEBI:57287"/>
        <dbReference type="ChEBI" id="CHEBI:57288"/>
        <dbReference type="EC" id="2.3.1.1"/>
    </reaction>
</comment>
<comment type="pathway">
    <text evidence="1">Amino-acid biosynthesis; L-arginine biosynthesis; L-ornithine and N-acetyl-L-glutamate from L-glutamate and N(2)-acetyl-L-ornithine (cyclic): step 1/1.</text>
</comment>
<comment type="pathway">
    <text evidence="1">Amino-acid biosynthesis; L-arginine biosynthesis; N(2)-acetyl-L-ornithine from L-glutamate: step 1/4.</text>
</comment>
<comment type="subunit">
    <text evidence="1">Heterodimer of an alpha and a beta chain.</text>
</comment>
<comment type="subcellular location">
    <subcellularLocation>
        <location evidence="1">Mitochondrion matrix</location>
    </subcellularLocation>
</comment>
<comment type="PTM">
    <text evidence="1">The alpha and beta chains are autoproteolytically processed from a single precursor protein within the mitochondrion.</text>
</comment>
<comment type="miscellaneous">
    <text evidence="1">This protein may be expected to contain an N-terminal transit peptide but none has been predicted.</text>
</comment>
<comment type="similarity">
    <text evidence="1">Belongs to the ArgJ family.</text>
</comment>
<protein>
    <recommendedName>
        <fullName evidence="1">Arginine biosynthesis bifunctional protein ArgJ, mitochondrial</fullName>
    </recommendedName>
    <domain>
        <recommendedName>
            <fullName evidence="1">Glutamate N-acetyltransferase</fullName>
            <shortName evidence="1">GAT</shortName>
            <ecNumber evidence="1">2.3.1.35</ecNumber>
        </recommendedName>
        <alternativeName>
            <fullName evidence="1">Ornithine acetyltransferase</fullName>
            <shortName evidence="1">OATase</shortName>
        </alternativeName>
        <alternativeName>
            <fullName evidence="1">Ornithine transacetylase</fullName>
        </alternativeName>
    </domain>
    <domain>
        <recommendedName>
            <fullName evidence="1">Amino-acid acetyltransferase</fullName>
            <ecNumber evidence="1">2.3.1.1</ecNumber>
        </recommendedName>
        <alternativeName>
            <fullName evidence="1">N-acetylglutamate synthase</fullName>
            <shortName evidence="1">AGS</shortName>
        </alternativeName>
    </domain>
    <component>
        <recommendedName>
            <fullName evidence="1">Arginine biosynthesis bifunctional protein ArgJ alpha chain</fullName>
        </recommendedName>
    </component>
    <component>
        <recommendedName>
            <fullName evidence="1">Arginine biosynthesis bifunctional protein ArgJ beta chain</fullName>
        </recommendedName>
    </component>
</protein>
<proteinExistence type="inferred from homology"/>
<gene>
    <name type="ORF">CLUG_03318</name>
</gene>
<name>ARGJ_CLAL4</name>
<dbReference type="EC" id="2.3.1.35" evidence="1"/>
<dbReference type="EC" id="2.3.1.1" evidence="1"/>
<dbReference type="EMBL" id="CH408079">
    <property type="protein sequence ID" value="EEQ39190.1"/>
    <property type="molecule type" value="Genomic_DNA"/>
</dbReference>
<dbReference type="RefSeq" id="XP_002616077.1">
    <property type="nucleotide sequence ID" value="XM_002616031.1"/>
</dbReference>
<dbReference type="SMR" id="C4Y584"/>
<dbReference type="FunCoup" id="C4Y584">
    <property type="interactions" value="292"/>
</dbReference>
<dbReference type="STRING" id="306902.C4Y584"/>
<dbReference type="MEROPS" id="T05.001"/>
<dbReference type="GeneID" id="8496866"/>
<dbReference type="KEGG" id="clu:CLUG_03318"/>
<dbReference type="VEuPathDB" id="FungiDB:CLUG_03318"/>
<dbReference type="HOGENOM" id="CLU_027172_1_0_1"/>
<dbReference type="InParanoid" id="C4Y584"/>
<dbReference type="OMA" id="WGRIVMA"/>
<dbReference type="OrthoDB" id="80327at4891"/>
<dbReference type="UniPathway" id="UPA00068">
    <property type="reaction ID" value="UER00106"/>
</dbReference>
<dbReference type="UniPathway" id="UPA00068">
    <property type="reaction ID" value="UER00111"/>
</dbReference>
<dbReference type="Proteomes" id="UP000007703">
    <property type="component" value="Unassembled WGS sequence"/>
</dbReference>
<dbReference type="GO" id="GO:0005759">
    <property type="term" value="C:mitochondrial matrix"/>
    <property type="evidence" value="ECO:0007669"/>
    <property type="project" value="UniProtKB-SubCell"/>
</dbReference>
<dbReference type="GO" id="GO:0004358">
    <property type="term" value="F:glutamate N-acetyltransferase activity"/>
    <property type="evidence" value="ECO:0007669"/>
    <property type="project" value="UniProtKB-UniRule"/>
</dbReference>
<dbReference type="GO" id="GO:0004042">
    <property type="term" value="F:L-glutamate N-acetyltransferase activity"/>
    <property type="evidence" value="ECO:0007669"/>
    <property type="project" value="UniProtKB-UniRule"/>
</dbReference>
<dbReference type="GO" id="GO:0006526">
    <property type="term" value="P:L-arginine biosynthetic process"/>
    <property type="evidence" value="ECO:0007669"/>
    <property type="project" value="UniProtKB-UniRule"/>
</dbReference>
<dbReference type="GO" id="GO:0006592">
    <property type="term" value="P:ornithine biosynthetic process"/>
    <property type="evidence" value="ECO:0007669"/>
    <property type="project" value="TreeGrafter"/>
</dbReference>
<dbReference type="CDD" id="cd02152">
    <property type="entry name" value="OAT"/>
    <property type="match status" value="1"/>
</dbReference>
<dbReference type="FunFam" id="3.60.70.12:FF:000001">
    <property type="entry name" value="Arginine biosynthesis bifunctional protein ArgJ, chloroplastic"/>
    <property type="match status" value="1"/>
</dbReference>
<dbReference type="FunFam" id="3.10.20.340:FF:000002">
    <property type="entry name" value="Arginine biosynthesis bifunctional protein ArgJ, mitochondrial"/>
    <property type="match status" value="1"/>
</dbReference>
<dbReference type="FunFam" id="3.30.2330.10:FF:000001">
    <property type="entry name" value="Arginine biosynthesis bifunctional protein ArgJ, mitochondrial"/>
    <property type="match status" value="1"/>
</dbReference>
<dbReference type="Gene3D" id="3.30.2330.10">
    <property type="entry name" value="arginine biosynthesis bifunctional protein suprefamily"/>
    <property type="match status" value="1"/>
</dbReference>
<dbReference type="Gene3D" id="3.10.20.340">
    <property type="entry name" value="ArgJ beta chain, C-terminal domain"/>
    <property type="match status" value="1"/>
</dbReference>
<dbReference type="Gene3D" id="3.60.70.12">
    <property type="entry name" value="L-amino peptidase D-ALA esterase/amidase"/>
    <property type="match status" value="1"/>
</dbReference>
<dbReference type="HAMAP" id="MF_01106">
    <property type="entry name" value="ArgJ"/>
    <property type="match status" value="1"/>
</dbReference>
<dbReference type="InterPro" id="IPR002813">
    <property type="entry name" value="Arg_biosynth_ArgJ"/>
</dbReference>
<dbReference type="InterPro" id="IPR016117">
    <property type="entry name" value="ArgJ-like_dom_sf"/>
</dbReference>
<dbReference type="InterPro" id="IPR042195">
    <property type="entry name" value="ArgJ_beta_C"/>
</dbReference>
<dbReference type="NCBIfam" id="TIGR00120">
    <property type="entry name" value="ArgJ"/>
    <property type="match status" value="1"/>
</dbReference>
<dbReference type="NCBIfam" id="NF003802">
    <property type="entry name" value="PRK05388.1"/>
    <property type="match status" value="1"/>
</dbReference>
<dbReference type="PANTHER" id="PTHR23100">
    <property type="entry name" value="ARGININE BIOSYNTHESIS BIFUNCTIONAL PROTEIN ARGJ"/>
    <property type="match status" value="1"/>
</dbReference>
<dbReference type="PANTHER" id="PTHR23100:SF0">
    <property type="entry name" value="ARGININE BIOSYNTHESIS BIFUNCTIONAL PROTEIN ARGJ, MITOCHONDRIAL"/>
    <property type="match status" value="1"/>
</dbReference>
<dbReference type="Pfam" id="PF01960">
    <property type="entry name" value="ArgJ"/>
    <property type="match status" value="1"/>
</dbReference>
<dbReference type="SUPFAM" id="SSF56266">
    <property type="entry name" value="DmpA/ArgJ-like"/>
    <property type="match status" value="1"/>
</dbReference>
<feature type="chain" id="PRO_0000398042" description="Arginine biosynthesis bifunctional protein ArgJ alpha chain" evidence="1">
    <location>
        <begin position="1"/>
        <end position="204"/>
    </location>
</feature>
<feature type="chain" id="PRO_0000398043" description="Arginine biosynthesis bifunctional protein ArgJ beta chain" evidence="1">
    <location>
        <begin position="205"/>
        <end position="413"/>
    </location>
</feature>
<feature type="active site" description="Nucleophile" evidence="1">
    <location>
        <position position="205"/>
    </location>
</feature>
<feature type="binding site" evidence="1">
    <location>
        <position position="168"/>
    </location>
    <ligand>
        <name>substrate</name>
    </ligand>
</feature>
<feature type="binding site" evidence="1">
    <location>
        <position position="194"/>
    </location>
    <ligand>
        <name>substrate</name>
    </ligand>
</feature>
<feature type="binding site" evidence="1">
    <location>
        <position position="205"/>
    </location>
    <ligand>
        <name>substrate</name>
    </ligand>
</feature>
<feature type="binding site" evidence="1">
    <location>
        <position position="292"/>
    </location>
    <ligand>
        <name>substrate</name>
    </ligand>
</feature>
<feature type="site" description="Involved in the stabilization of negative charge on the oxyanion by the formation of the oxyanion hole" evidence="1">
    <location>
        <position position="129"/>
    </location>
</feature>
<feature type="site" description="Involved in the stabilization of negative charge on the oxyanion by the formation of the oxyanion hole" evidence="1">
    <location>
        <position position="130"/>
    </location>
</feature>
<feature type="site" description="Cleavage; by autolysis" evidence="1">
    <location>
        <begin position="204"/>
        <end position="205"/>
    </location>
</feature>
<keyword id="KW-0012">Acyltransferase</keyword>
<keyword id="KW-0028">Amino-acid biosynthesis</keyword>
<keyword id="KW-0055">Arginine biosynthesis</keyword>
<keyword id="KW-0068">Autocatalytic cleavage</keyword>
<keyword id="KW-0496">Mitochondrion</keyword>
<keyword id="KW-0511">Multifunctional enzyme</keyword>
<keyword id="KW-1185">Reference proteome</keyword>
<keyword id="KW-0808">Transferase</keyword>
<reference key="1">
    <citation type="journal article" date="2009" name="Nature">
        <title>Evolution of pathogenicity and sexual reproduction in eight Candida genomes.</title>
        <authorList>
            <person name="Butler G."/>
            <person name="Rasmussen M.D."/>
            <person name="Lin M.F."/>
            <person name="Santos M.A.S."/>
            <person name="Sakthikumar S."/>
            <person name="Munro C.A."/>
            <person name="Rheinbay E."/>
            <person name="Grabherr M."/>
            <person name="Forche A."/>
            <person name="Reedy J.L."/>
            <person name="Agrafioti I."/>
            <person name="Arnaud M.B."/>
            <person name="Bates S."/>
            <person name="Brown A.J.P."/>
            <person name="Brunke S."/>
            <person name="Costanzo M.C."/>
            <person name="Fitzpatrick D.A."/>
            <person name="de Groot P.W.J."/>
            <person name="Harris D."/>
            <person name="Hoyer L.L."/>
            <person name="Hube B."/>
            <person name="Klis F.M."/>
            <person name="Kodira C."/>
            <person name="Lennard N."/>
            <person name="Logue M.E."/>
            <person name="Martin R."/>
            <person name="Neiman A.M."/>
            <person name="Nikolaou E."/>
            <person name="Quail M.A."/>
            <person name="Quinn J."/>
            <person name="Santos M.C."/>
            <person name="Schmitzberger F.F."/>
            <person name="Sherlock G."/>
            <person name="Shah P."/>
            <person name="Silverstein K.A.T."/>
            <person name="Skrzypek M.S."/>
            <person name="Soll D."/>
            <person name="Staggs R."/>
            <person name="Stansfield I."/>
            <person name="Stumpf M.P.H."/>
            <person name="Sudbery P.E."/>
            <person name="Srikantha T."/>
            <person name="Zeng Q."/>
            <person name="Berman J."/>
            <person name="Berriman M."/>
            <person name="Heitman J."/>
            <person name="Gow N.A.R."/>
            <person name="Lorenz M.C."/>
            <person name="Birren B.W."/>
            <person name="Kellis M."/>
            <person name="Cuomo C.A."/>
        </authorList>
    </citation>
    <scope>NUCLEOTIDE SEQUENCE [LARGE SCALE GENOMIC DNA]</scope>
    <source>
        <strain>ATCC 42720</strain>
    </source>
</reference>